<evidence type="ECO:0000250" key="1">
    <source>
        <dbReference type="UniProtKB" id="B9VUU3"/>
    </source>
</evidence>
<evidence type="ECO:0000250" key="2">
    <source>
        <dbReference type="UniProtKB" id="P03300"/>
    </source>
</evidence>
<evidence type="ECO:0000250" key="3">
    <source>
        <dbReference type="UniProtKB" id="P03301"/>
    </source>
</evidence>
<evidence type="ECO:0000250" key="4">
    <source>
        <dbReference type="UniProtKB" id="P03303"/>
    </source>
</evidence>
<evidence type="ECO:0000250" key="5">
    <source>
        <dbReference type="UniProtKB" id="P03313"/>
    </source>
</evidence>
<evidence type="ECO:0000250" key="6">
    <source>
        <dbReference type="UniProtKB" id="Q66478"/>
    </source>
</evidence>
<evidence type="ECO:0000250" key="7">
    <source>
        <dbReference type="UniProtKB" id="Q9QF31"/>
    </source>
</evidence>
<evidence type="ECO:0000255" key="8"/>
<evidence type="ECO:0000255" key="9">
    <source>
        <dbReference type="PROSITE-ProRule" id="PRU00539"/>
    </source>
</evidence>
<evidence type="ECO:0000255" key="10">
    <source>
        <dbReference type="PROSITE-ProRule" id="PRU00551"/>
    </source>
</evidence>
<evidence type="ECO:0000255" key="11">
    <source>
        <dbReference type="PROSITE-ProRule" id="PRU01222"/>
    </source>
</evidence>
<evidence type="ECO:0000256" key="12">
    <source>
        <dbReference type="SAM" id="MobiDB-lite"/>
    </source>
</evidence>
<evidence type="ECO:0000269" key="13">
    <source>
    </source>
</evidence>
<evidence type="ECO:0000269" key="14">
    <source>
    </source>
</evidence>
<evidence type="ECO:0000269" key="15">
    <source>
    </source>
</evidence>
<evidence type="ECO:0000305" key="16"/>
<evidence type="ECO:0000305" key="17">
    <source>
    </source>
</evidence>
<evidence type="ECO:0007744" key="18">
    <source>
        <dbReference type="PDB" id="3W95"/>
    </source>
</evidence>
<evidence type="ECO:0007744" key="19">
    <source>
        <dbReference type="PDB" id="6HLW"/>
    </source>
</evidence>
<evidence type="ECO:0007744" key="20">
    <source>
        <dbReference type="PDB" id="6I2K"/>
    </source>
</evidence>
<evidence type="ECO:0007829" key="21">
    <source>
        <dbReference type="PDB" id="3W95"/>
    </source>
</evidence>
<evidence type="ECO:0007829" key="22">
    <source>
        <dbReference type="PDB" id="6HLW"/>
    </source>
</evidence>
<evidence type="ECO:0007829" key="23">
    <source>
        <dbReference type="PDB" id="6I2K"/>
    </source>
</evidence>
<comment type="function">
    <molecule>Capsid protein VP1</molecule>
    <text evidence="2 14">Forms an icosahedral capsid of pseudo T=3 symmetry with capsid proteins VP2 and VP3 (By similarity). The capsid is 300 Angstroms in diameter, composed of 60 copies of each capsid protein and enclosing the viral positive strand RNA genome (By similarity). Capsid protein VP1 mainly forms the vertices of the capsid (By similarity). Capsid protein VP1, together with VP2, interacts with host cell receptor SCARB2 to provide virion attachment to target host cells (PubMed:30531980). This attachment induces virion internalization (By similarity). After binding to its receptor, the capsid undergoes conformational changes (By similarity). Capsid protein VP1 N-terminus (that contains an amphipathic alpha-helix) and capsid protein VP4 are externalized (By similarity). Together, they shape a pore in the host membrane through which viral genome is translocated to host cell cytoplasm (By similarity).</text>
</comment>
<comment type="function">
    <molecule>Capsid protein VP2</molecule>
    <text evidence="2 14">Forms an icosahedral capsid of pseudo T=3 symmetry with capsid proteins VP2 and VP3 (By similarity). The capsid is 300 Angstroms in diameter, composed of 60 copies of each capsid protein and enclosing the viral positive strand RNA genome (By similarity). Capsid protein VP2, together with VP1, interacts with host cell receptor SCARB2 to provide virion attachment to target host cells (PubMed:30531980).</text>
</comment>
<comment type="function">
    <molecule>Capsid protein VP3</molecule>
    <text evidence="2">Forms an icosahedral capsid of pseudo T=3 symmetry with capsid proteins VP2 and VP3 (By similarity). The capsid is 300 Angstroms in diameter, composed of 60 copies of each capsid protein and enclosing the viral positive strand RNA genome (By similarity).</text>
</comment>
<comment type="function">
    <molecule>Capsid protein VP4</molecule>
    <text evidence="2">Lies on the inner surface of the capsid shell (By similarity). After binding to the host receptor, the capsid undergoes conformational changes (By similarity). Capsid protein VP4 is released, Capsid protein VP1 N-terminus is externalized, and together, they shape a pore in the host membrane through which the viral genome is translocated into the host cell cytoplasm (By similarity).</text>
</comment>
<comment type="function">
    <molecule>Capsid protein VP0</molecule>
    <text evidence="2">Component of immature procapsids, which is cleaved into capsid proteins VP4 and VP2 after maturation (By similarity). Allows the capsid to remain inactive before the maturation step (By similarity).</text>
</comment>
<comment type="function">
    <molecule>Protease 2A</molecule>
    <text evidence="2 6">Cysteine protease that cleaves viral polyprotein and specific host proteins (By similarity). It is responsible for the autocatalytic cleavage between the P1 and P2 regions, which is the first cleavage occurring in the polyprotein (By similarity). Also cleaves the host translation initiation factor EIF4G1, in order to shut down the capped cellular mRNA translation (By similarity). Inhibits the host nucleus-cytoplasm protein and RNA trafficking by cleaving host members of the nuclear pores (By similarity). Counteracts stress granule formation probably by antagonizing its assembly or promoting its dissassembly (By similarity). Cleaves and inhibits host IFIH1/MDA5, thereby inhibiting the type-I IFN production and the establishment of the antiviral state (By similarity). Cleaves and inhibits host MAVS, thereby inhibiting the type-I IFN production and the establishment of the antiviral state (By similarity).</text>
</comment>
<comment type="function">
    <molecule>Protein 2B</molecule>
    <text evidence="2">Plays an essential role in the virus replication cycle by acting as a viroporin. Creates a pore in the host endoplasmic reticulum and as a consequence releases Ca2+ in the cytoplasm of infected cell. In turn, high levels of cytoplasmic calcium may trigger membrane trafficking and transport of viral ER-associated proteins to viroplasms, sites of viral genome replication.</text>
</comment>
<comment type="function">
    <molecule>Protein 2C</molecule>
    <text evidence="2">Induces and associates with structural rearrangements of intracellular membranes. Displays RNA-binding, nucleotide binding and NTPase activities. May play a role in virion morphogenesis and viral RNA encapsidation by interacting with the capsid protein VP3.</text>
</comment>
<comment type="function">
    <molecule>Protein 3AB</molecule>
    <text evidence="2">Localizes the viral replication complex to the surface of membranous vesicles. Together with protein 3CD binds the Cis-Active RNA Element (CRE) which is involved in RNA synthesis initiation. Acts as a cofactor to stimulate the activity of 3D polymerase, maybe through a nucleid acid chaperone activity.</text>
</comment>
<comment type="function">
    <molecule>Protein 3A</molecule>
    <text evidence="2 17">Localizes the viral replication complex to the surface of membranous vesicles (By similarity). It inhibits host cell endoplasmic reticulum-to-Golgi apparatus transport and causes the disassembly of the Golgi complex, possibly through GBF1 interaction (By similarity). This would result in depletion of MHC, trail receptors and IFN receptors at the host cell surface (By similarity). Plays an essential role in viral RNA replication by recruiting ACBD3 and PI4KB at the viral replication sites, thereby allowing the formation of the rearranged membranous structures where viral replication takes place (Probable).</text>
</comment>
<comment type="function">
    <molecule>Viral protein genome-linked</molecule>
    <text evidence="2">Acts as a primer for viral RNA replication and remains covalently bound to viral genomic RNA. VPg is uridylylated prior to priming replication into VPg-pUpU. The oriI viral genomic sequence may act as a template for this. The VPg-pUpU is then used as primer on the genomic RNA poly(A) by the RNA-dependent RNA polymerase to replicate the viral genome. During genome replication, the VPg-RNA linkage is removed by the host TDP2, thereby accelerating replication. During the late stage of the replication cycle, host TDP2 is excluded from sites of viral RNA synthesis and encapsidation, allowing for the generation of progeny virions.</text>
</comment>
<comment type="function">
    <molecule>Protein 3CD</molecule>
    <text evidence="2">Involved in the viral replication complex and viral polypeptide maturation. It exhibits protease activity with a specificity and catalytic efficiency that is different from protease 3C. Protein 3CD lacks polymerase activity. Protein 3CD binds to the 5'UTR of the viral genome.</text>
</comment>
<comment type="function">
    <molecule>Protease 3C</molecule>
    <text evidence="2 4 6">Major viral protease that mediates proteolytic processing of the polyprotein (By similarity). Cleaves host EIF5B, contributing to host translation shutoff (By similarity). Also cleaves host PABPC1, contributing to host translation shutoff (By similarity). Disassembles host cytoplasmic stress granules by cleaving host G3BP1, although this effect is less prononced than the inhibition induced by protease 2A (By similarity). Cleaves host RIGI and thus contributes to the inhibition of type I interferon production (By similarity). Cleaves host IRF7 and thus contributes to the inhibition of type I interferon production (By similarity). Cleaves host HNRNPA1 thereby increasing the translation of apoptosis protease activating factor APAF1, leading to apoptosis of the host cell (By similarity). Cleaves host NLRP1, triggers host N-glycine-mediated degradation of the autoinhibitory NLRP1 N-terminal fragment (By similarity).</text>
</comment>
<comment type="function">
    <molecule>RNA-directed RNA polymerase</molecule>
    <text evidence="2">Replicates the viral genomic RNA on the surface of intracellular membranes. May form linear arrays of subunits that propagate along a strong head-to-tail interaction called interface-I. Covalently attaches UMP to a tyrosine of VPg, which is used to prime RNA synthesis. The positive stranded RNA genome is first replicated at virus induced membranous vesicles, creating a dsRNA genomic replication form. This dsRNA is then used as template to synthesize positive stranded RNA genomes. ss(+)RNA genomes are either translated, replicated or encapsidated.</text>
</comment>
<comment type="catalytic activity">
    <molecule>Protein 2C</molecule>
    <reaction evidence="2">
        <text>a ribonucleoside 5'-triphosphate + H2O = a ribonucleoside 5'-diphosphate + phosphate + H(+)</text>
        <dbReference type="Rhea" id="RHEA:23680"/>
        <dbReference type="ChEBI" id="CHEBI:15377"/>
        <dbReference type="ChEBI" id="CHEBI:15378"/>
        <dbReference type="ChEBI" id="CHEBI:43474"/>
        <dbReference type="ChEBI" id="CHEBI:57930"/>
        <dbReference type="ChEBI" id="CHEBI:61557"/>
        <dbReference type="EC" id="3.6.1.15"/>
    </reaction>
</comment>
<comment type="catalytic activity">
    <molecule>Protease 2A</molecule>
    <reaction evidence="2">
        <text>Selective cleavage of Tyr-|-Gly bond in the picornavirus polyprotein.</text>
        <dbReference type="EC" id="3.4.22.29"/>
    </reaction>
</comment>
<comment type="catalytic activity">
    <molecule>RNA-directed RNA polymerase</molecule>
    <reaction evidence="9">
        <text>RNA(n) + a ribonucleoside 5'-triphosphate = RNA(n+1) + diphosphate</text>
        <dbReference type="Rhea" id="RHEA:21248"/>
        <dbReference type="Rhea" id="RHEA-COMP:14527"/>
        <dbReference type="Rhea" id="RHEA-COMP:17342"/>
        <dbReference type="ChEBI" id="CHEBI:33019"/>
        <dbReference type="ChEBI" id="CHEBI:61557"/>
        <dbReference type="ChEBI" id="CHEBI:140395"/>
        <dbReference type="EC" id="2.7.7.48"/>
    </reaction>
</comment>
<comment type="catalytic activity">
    <molecule>Protease 3C</molecule>
    <reaction evidence="11">
        <text>Selective cleavage of Gln-|-Gly bond in the poliovirus polyprotein. In other picornavirus reactions Glu may be substituted for Gln, and Ser or Thr for Gly.</text>
        <dbReference type="EC" id="3.4.22.28"/>
    </reaction>
</comment>
<comment type="cofactor">
    <molecule>RNA-directed RNA polymerase</molecule>
    <cofactor evidence="2">
        <name>Mg(2+)</name>
        <dbReference type="ChEBI" id="CHEBI:18420"/>
    </cofactor>
    <text evidence="2 5">Binds 2 magnesium ions that constitute a dinuclear catalytic metal center (By similarity). The magnesium ions are not prebound but only present for catalysis (By similarity). Requires the presence of 3CDpro or 3CPro (By similarity).</text>
</comment>
<comment type="activity regulation">
    <molecule>RNA-directed RNA polymerase</molecule>
    <text>Replication or transcription is subject to high level of random mutations by the nucleotide analog ribavirin.</text>
</comment>
<comment type="subunit">
    <molecule>Capsid protein VP0</molecule>
    <text evidence="2">Interacts with capsid protein VP1 and capsid protein VP3 to form heterotrimeric protomers.</text>
</comment>
<comment type="subunit">
    <molecule>Capsid protein VP1</molecule>
    <text evidence="2 14">Interacts with capsid protein VP0, and capsid protein VP3 to form heterotrimeric protomers (By similarity). Five protomers subsequently associate to form pentamers which serve as building blocks for the capsid (By similarity). Interacts with capsid protein VP2, capsid protein VP3 and capsid protein VP4 following cleavage of capsid protein VP0 (By similarity). Interacts with host SCARB2 (PubMed:30531980). Interacts with host ARF6; this interaction mediates viral endocytosis (By similarity).</text>
</comment>
<comment type="subunit">
    <molecule>Capsid protein VP2</molecule>
    <text evidence="2 14">Interacts with capsid protein VP1 and capsid protein VP3 in the mature capsid (By similarity). Interacts with host SCARB2 (PubMed:30531980).</text>
</comment>
<comment type="subunit">
    <molecule>Capsid protein VP3</molecule>
    <text evidence="2">Interacts with capsid protein VP0 and capsid protein VP1 to form heterotrimeric protomers (By similarity). Five protomers subsequently associate to form pentamers which serve as building blocks for the capsid (By similarity). Interacts with capsid protein VP4 in the mature capsid (By similarity). Interacts with protein 2C; this interaction may be important for virion morphogenesis (By similarity).</text>
</comment>
<comment type="subunit">
    <molecule>Capsid protein VP4</molecule>
    <text evidence="2">Interacts with capsid protein VP1 and capsid protein VP3.</text>
</comment>
<comment type="subunit">
    <molecule>Protease 2A</molecule>
    <text evidence="7">Homodimer.</text>
</comment>
<comment type="subunit">
    <molecule>Protein 2B</molecule>
    <text evidence="6">Interacts with host BAX; this interaction activates the mitochondrial apoptotic pathway. Interacts with host ILF2.</text>
</comment>
<comment type="subunit">
    <molecule>Protein 2C</molecule>
    <text evidence="2">Homohexamer; forms a hexameric ring structure with 6-fold symmetry characteristic of AAA+ ATPases (By similarity). Interacts (via N-terminus) with host RTN3 (via reticulon domain); this interaction is important for viral replication (By similarity). Interacts with capsid protein VP3; this interaction may be important for virion morphogenesis (By similarity).</text>
</comment>
<comment type="subunit">
    <molecule>Protein 3AB</molecule>
    <text evidence="2">Interacts with protein 3CD.</text>
</comment>
<comment type="subunit">
    <molecule>Protein 3A</molecule>
    <text evidence="2 15">Homodimer (By similarity). Interacts with host GBF1 (By similarity). Interacts (via GOLD domain) with host ACBD3 (via GOLD domain); this interaction allows the formation of a viral protein 3A/ACBD3 heterotetramer with a 2:2 stoichiometry, which will stimulate the recruitment of host PI4KB in order to synthesize PI4P at the viral RNA replication sites (PubMed:31381608).</text>
</comment>
<comment type="subunit">
    <molecule>Viral protein genome-linked</molecule>
    <text evidence="2">Interacts with RNA-directed RNA polymerase.</text>
</comment>
<comment type="subunit">
    <molecule>Protease 3C</molecule>
    <text evidence="7">Interacts with host IFIH1/MDA5; this interaction inhibits host IFIH1.</text>
</comment>
<comment type="subunit">
    <molecule>Protein 3CD</molecule>
    <text evidence="2">Interacts with protein 3AB and with RNA-directed RNA polymerase.</text>
</comment>
<comment type="subunit">
    <molecule>RNA-directed RNA polymerase</molecule>
    <text evidence="2">Interacts with Viral protein genome-linked and with protein 3CD.</text>
</comment>
<comment type="subcellular location">
    <molecule>Capsid protein VP0</molecule>
    <subcellularLocation>
        <location>Virion</location>
    </subcellularLocation>
    <subcellularLocation>
        <location evidence="16">Host cytoplasm</location>
    </subcellularLocation>
</comment>
<comment type="subcellular location">
    <molecule>Capsid protein VP4</molecule>
    <subcellularLocation>
        <location>Virion</location>
    </subcellularLocation>
</comment>
<comment type="subcellular location">
    <molecule>Capsid protein VP2</molecule>
    <subcellularLocation>
        <location evidence="2">Virion</location>
    </subcellularLocation>
    <subcellularLocation>
        <location evidence="16">Host cytoplasm</location>
    </subcellularLocation>
</comment>
<comment type="subcellular location">
    <molecule>Capsid protein VP3</molecule>
    <subcellularLocation>
        <location evidence="2">Virion</location>
    </subcellularLocation>
    <subcellularLocation>
        <location evidence="16">Host cytoplasm</location>
    </subcellularLocation>
</comment>
<comment type="subcellular location">
    <molecule>Capsid protein VP1</molecule>
    <subcellularLocation>
        <location evidence="2">Virion</location>
    </subcellularLocation>
    <subcellularLocation>
        <location evidence="16">Host cytoplasm</location>
    </subcellularLocation>
</comment>
<comment type="subcellular location">
    <molecule>Protein 2B</molecule>
    <subcellularLocation>
        <location evidence="16">Host cytoplasmic vesicle membrane</location>
        <topology evidence="16">Peripheral membrane protein</topology>
        <orientation evidence="16">Cytoplasmic side</orientation>
    </subcellularLocation>
    <text>Probably localizes to the surface of intracellular membrane vesicles that are induced after virus infection as the site for viral RNA replication. These vesicles are derived from the endoplasmic reticulum.</text>
</comment>
<comment type="subcellular location">
    <molecule>Protein 2C</molecule>
    <subcellularLocation>
        <location evidence="16">Host cytoplasmic vesicle membrane</location>
        <topology evidence="16">Peripheral membrane protein</topology>
        <orientation evidence="16">Cytoplasmic side</orientation>
    </subcellularLocation>
    <text>Probably localizes to the surface of intracellular membrane vesicles that are induced after virus infection as the site for viral RNA replication. These vesicles are derived from the endoplasmic reticulum.</text>
</comment>
<comment type="subcellular location">
    <molecule>Protein 3A</molecule>
    <subcellularLocation>
        <location evidence="16">Host cytoplasmic vesicle membrane</location>
        <topology evidence="16">Peripheral membrane protein</topology>
        <orientation evidence="16">Cytoplasmic side</orientation>
    </subcellularLocation>
    <text>Probably localizes to the surface of intracellular membrane vesicles that are induced after virus infection as the site for viral RNA replication. These vesicles are derived from the endoplasmic reticulum.</text>
</comment>
<comment type="subcellular location">
    <molecule>Protein 3AB</molecule>
    <subcellularLocation>
        <location evidence="16">Host cytoplasmic vesicle membrane</location>
        <topology evidence="16">Peripheral membrane protein</topology>
        <orientation evidence="16">Cytoplasmic side</orientation>
    </subcellularLocation>
    <text>Probably localizes to the surface of intracellular membrane vesicles that are induced after virus infection as the site for viral RNA replication. These vesicles are derived from the endoplasmic reticulum.</text>
</comment>
<comment type="subcellular location">
    <molecule>Viral protein genome-linked</molecule>
    <subcellularLocation>
        <location evidence="2">Virion</location>
    </subcellularLocation>
    <subcellularLocation>
        <location evidence="6">Host cytoplasm</location>
    </subcellularLocation>
</comment>
<comment type="subcellular location">
    <molecule>Protease 3C</molecule>
    <subcellularLocation>
        <location>Host cytoplasm</location>
    </subcellularLocation>
</comment>
<comment type="subcellular location">
    <molecule>Protein 3CD</molecule>
    <subcellularLocation>
        <location evidence="2">Host nucleus</location>
    </subcellularLocation>
    <subcellularLocation>
        <location evidence="2">Host cytoplasm</location>
    </subcellularLocation>
    <subcellularLocation>
        <location evidence="16">Host cytoplasmic vesicle membrane</location>
        <topology evidence="16">Peripheral membrane protein</topology>
        <orientation evidence="16">Cytoplasmic side</orientation>
    </subcellularLocation>
    <text>Probably localizes to the surface of intracellular membrane vesicles that are induced after virus infection as the site for viral RNA replication. These vesicles are derived from the endoplasmic reticulum.</text>
</comment>
<comment type="subcellular location">
    <molecule>RNA-directed RNA polymerase</molecule>
    <subcellularLocation>
        <location evidence="16">Host cytoplasmic vesicle membrane</location>
        <topology evidence="16">Peripheral membrane protein</topology>
        <orientation evidence="16">Cytoplasmic side</orientation>
    </subcellularLocation>
    <text>Probably localizes to the surface of intracellular membrane vesicles that are induced after virus infection as the site for viral RNA replication. These vesicles are derived from the endoplasmic reticulum.</text>
</comment>
<comment type="domain">
    <molecule>Protein 2C</molecule>
    <text evidence="1 2">The N-terminus has membrane-binding (By similarity). The N-terminus also displays RNA-binding properties (By similarity). The N-terminus is involved in oligomerization (By similarity). The central part contains an ATPase domain and a degenerate C4-type zinc-finger with only 3 cysteines (By similarity). The C-terminus is involved in RNA-binding (By similarity). The extreme C-terminus contains a region involved in oligomerization (By similarity).</text>
</comment>
<comment type="PTM">
    <molecule>Genome polyprotein</molecule>
    <text evidence="2">Specific enzymatic cleavages in vivo by the viral proteases yield processing intermediates and the mature proteins.</text>
</comment>
<comment type="PTM">
    <molecule>Capsid protein VP0</molecule>
    <text evidence="2">Myristoylation is required for the formation of pentamers during virus assembly. Further assembly of 12 pentamers and a molecule of genomic RNA generates the provirion.</text>
</comment>
<comment type="PTM">
    <molecule>Capsid protein VP0</molecule>
    <text evidence="2">During virion maturation, immature virions are rendered infectious following cleavage of VP0 into VP4 and VP2. This maturation seems to be an autocatalytic event triggered by the presence of RNA in the capsid and it is followed by a conformational change infectious virion.</text>
</comment>
<comment type="PTM">
    <molecule>Capsid protein VP4</molecule>
    <text evidence="2">Myristoylation is required during RNA encapsidation and formation of the mature virus particle.</text>
</comment>
<comment type="PTM">
    <molecule>Viral protein genome-linked</molecule>
    <text evidence="2">VPg is uridylylated by the polymerase into VPg-pUpU. This acts as a nucleotide-peptide primer for the genomic RNA replication.</text>
</comment>
<comment type="similarity">
    <text evidence="16">Belongs to the picornaviruses polyprotein family.</text>
</comment>
<keyword id="KW-0002">3D-structure</keyword>
<keyword id="KW-1072">Activation of host autophagy by virus</keyword>
<keyword id="KW-0067">ATP-binding</keyword>
<keyword id="KW-0068">Autocatalytic cleavage</keyword>
<keyword id="KW-0167">Capsid protein</keyword>
<keyword id="KW-1165">Clathrin-mediated endocytosis of virus by host</keyword>
<keyword id="KW-0191">Covalent protein-RNA linkage</keyword>
<keyword id="KW-0235">DNA replication</keyword>
<keyword id="KW-1262">Eukaryotic host gene expression shutoff by virus</keyword>
<keyword id="KW-1193">Eukaryotic host translation shutoff by virus</keyword>
<keyword id="KW-0347">Helicase</keyword>
<keyword id="KW-1035">Host cytoplasm</keyword>
<keyword id="KW-1036">Host cytoplasmic vesicle</keyword>
<keyword id="KW-1190">Host gene expression shutoff by virus</keyword>
<keyword id="KW-1043">Host membrane</keyword>
<keyword id="KW-1192">Host mRNA suppression by virus</keyword>
<keyword id="KW-1048">Host nucleus</keyword>
<keyword id="KW-0945">Host-virus interaction</keyword>
<keyword id="KW-0378">Hydrolase</keyword>
<keyword id="KW-1090">Inhibition of host innate immune response by virus</keyword>
<keyword id="KW-1097">Inhibition of host MAVS by virus</keyword>
<keyword id="KW-1089">Inhibition of host MDA5 by virus</keyword>
<keyword id="KW-1099">Inhibition of host mRNA nuclear export by virus</keyword>
<keyword id="KW-1088">Inhibition of host RIG-I by virus</keyword>
<keyword id="KW-1113">Inhibition of host RLR pathway by virus</keyword>
<keyword id="KW-0407">Ion channel</keyword>
<keyword id="KW-0406">Ion transport</keyword>
<keyword id="KW-0449">Lipoprotein</keyword>
<keyword id="KW-0460">Magnesium</keyword>
<keyword id="KW-0472">Membrane</keyword>
<keyword id="KW-0479">Metal-binding</keyword>
<keyword id="KW-0519">Myristate</keyword>
<keyword id="KW-0547">Nucleotide-binding</keyword>
<keyword id="KW-0548">Nucleotidyltransferase</keyword>
<keyword id="KW-0597">Phosphoprotein</keyword>
<keyword id="KW-1172">Pore-mediated penetration of viral genome into host cell</keyword>
<keyword id="KW-0645">Protease</keyword>
<keyword id="KW-0677">Repeat</keyword>
<keyword id="KW-0694">RNA-binding</keyword>
<keyword id="KW-0696">RNA-directed RNA polymerase</keyword>
<keyword id="KW-1143">T=pseudo3 icosahedral capsid protein</keyword>
<keyword id="KW-0788">Thiol protease</keyword>
<keyword id="KW-0808">Transferase</keyword>
<keyword id="KW-0813">Transport</keyword>
<keyword id="KW-1161">Viral attachment to host cell</keyword>
<keyword id="KW-1234">Viral attachment to host entry receptor</keyword>
<keyword id="KW-0899">Viral immunoevasion</keyword>
<keyword id="KW-1182">Viral ion channel</keyword>
<keyword id="KW-1162">Viral penetration into host cytoplasm</keyword>
<keyword id="KW-0693">Viral RNA replication</keyword>
<keyword id="KW-0946">Virion</keyword>
<keyword id="KW-1164">Virus endocytosis by host</keyword>
<keyword id="KW-1160">Virus entry into host cell</keyword>
<keyword id="KW-0862">Zinc</keyword>
<keyword id="KW-0863">Zinc-finger</keyword>
<organism>
    <name type="scientific">Human enterovirus 71 (strain 7423/MS/87)</name>
    <name type="common">EV71</name>
    <name type="synonym">EV-71</name>
    <dbReference type="NCBI Taxonomy" id="103922"/>
    <lineage>
        <taxon>Viruses</taxon>
        <taxon>Riboviria</taxon>
        <taxon>Orthornavirae</taxon>
        <taxon>Pisuviricota</taxon>
        <taxon>Pisoniviricetes</taxon>
        <taxon>Picornavirales</taxon>
        <taxon>Picornaviridae</taxon>
        <taxon>Ensavirinae</taxon>
        <taxon>Enterovirus</taxon>
        <taxon>Enterovirus A</taxon>
    </lineage>
</organism>
<protein>
    <recommendedName>
        <fullName>Genome polyprotein</fullName>
    </recommendedName>
    <component>
        <recommendedName>
            <fullName>P1</fullName>
        </recommendedName>
    </component>
    <component>
        <recommendedName>
            <fullName>Capsid protein VP0</fullName>
        </recommendedName>
        <alternativeName>
            <fullName>VP4-VP2</fullName>
        </alternativeName>
    </component>
    <component>
        <recommendedName>
            <fullName>Capsid protein VP4</fullName>
        </recommendedName>
        <alternativeName>
            <fullName>P1A</fullName>
        </alternativeName>
        <alternativeName>
            <fullName>Virion protein 4</fullName>
        </alternativeName>
    </component>
    <component>
        <recommendedName>
            <fullName>Capsid protein VP2</fullName>
        </recommendedName>
        <alternativeName>
            <fullName>P1B</fullName>
        </alternativeName>
        <alternativeName>
            <fullName>Virion protein 2</fullName>
        </alternativeName>
    </component>
    <component>
        <recommendedName>
            <fullName>Capsid protein VP3</fullName>
        </recommendedName>
        <alternativeName>
            <fullName>P1C</fullName>
        </alternativeName>
        <alternativeName>
            <fullName>Virion protein 3</fullName>
        </alternativeName>
    </component>
    <component>
        <recommendedName>
            <fullName>Capsid protein VP1</fullName>
        </recommendedName>
        <alternativeName>
            <fullName>P1D</fullName>
        </alternativeName>
        <alternativeName>
            <fullName>Virion protein 1</fullName>
        </alternativeName>
    </component>
    <component>
        <recommendedName>
            <fullName>P2</fullName>
        </recommendedName>
    </component>
    <component>
        <recommendedName>
            <fullName>Protease 2A</fullName>
            <shortName>P2A</shortName>
            <ecNumber evidence="2">3.4.22.29</ecNumber>
        </recommendedName>
        <alternativeName>
            <fullName>Picornain 2A</fullName>
        </alternativeName>
        <alternativeName>
            <fullName>Protein 2A</fullName>
        </alternativeName>
    </component>
    <component>
        <recommendedName>
            <fullName>Protein 2B</fullName>
            <shortName>P2B</shortName>
        </recommendedName>
    </component>
    <component>
        <recommendedName>
            <fullName>Protein 2C</fullName>
            <shortName>P2C</shortName>
            <ecNumber evidence="2">3.6.1.15</ecNumber>
        </recommendedName>
    </component>
    <component>
        <recommendedName>
            <fullName>P3</fullName>
        </recommendedName>
    </component>
    <component>
        <recommendedName>
            <fullName>Protein 3AB</fullName>
        </recommendedName>
    </component>
    <component>
        <recommendedName>
            <fullName>Protein 3A</fullName>
            <shortName>P3A</shortName>
        </recommendedName>
    </component>
    <component>
        <recommendedName>
            <fullName>Viral protein genome-linked</fullName>
            <shortName>VPg</shortName>
        </recommendedName>
        <alternativeName>
            <fullName>Protein 3B</fullName>
            <shortName>P3B</shortName>
        </alternativeName>
    </component>
    <component>
        <recommendedName>
            <fullName>Protein 3CD</fullName>
            <ecNumber>3.4.22.28</ecNumber>
        </recommendedName>
    </component>
    <component>
        <recommendedName>
            <fullName evidence="11">Protease 3C</fullName>
            <ecNumber evidence="11">3.4.22.28</ecNumber>
        </recommendedName>
        <alternativeName>
            <fullName evidence="11">Picornain 3C</fullName>
            <shortName evidence="11">P3C</shortName>
        </alternativeName>
    </component>
    <component>
        <recommendedName>
            <fullName evidence="9">RNA-directed RNA polymerase</fullName>
            <shortName>RdRp</shortName>
            <ecNumber evidence="9">2.7.7.48</ecNumber>
        </recommendedName>
        <alternativeName>
            <fullName>3D polymerase</fullName>
            <shortName>3Dpol</shortName>
        </alternativeName>
        <alternativeName>
            <fullName>Protein 3D</fullName>
            <shortName>3D</shortName>
        </alternativeName>
    </component>
</protein>
<sequence length="2193" mass="242657">MGSQVSTQRSGSHENSNSATEGSTINYTTINYYKDSYAATAGKQSLKQDPDKFANPVKDIFTEMAAPLKSPSAEACGYSDRVAQLTIGNSTITTQEAANIIVGYGEWPSYCSDDDATAVDKPTRPDVSVNRFYTLDTKLWEKSSKGWYWKFPDVLTETGVFGQNAQFHYLYRSGFCIHVQCNASKFHQGALLVAILPEYVIGTVAGGTGTEDSHPPYKQTQPGADGFELQHPYVLDAGIPISQLTVCPHQWINLRTNNCATIIVPYMNTLPFDSALNHCNFGLLVVPISPLDFDQGATPVIPITITLAPMCSEFGGLRQAVTQGFPTELKPGTNQFLTTDDGVSAPILPNFHPTPCIHIPGEVRNLLELCQVETILEVNNVPTNATSLMERLRFPVSAQAGKGELCAVFRADPGRDGPWQSTMLGQLCGYYTQWSGSLEVTFMFTGSFMATGKMLIAYTPPGGPLPKDRATAMLGTHVIWDFGLQSSVTLVIPWISNTHYRAHARDGVFDYYTTGLVSIWYQTNYVVPIGAPNTAYILALAAAQKNFTMKLCKDTSHILQTASIQGDRVADVIESSIGDSVSRALTQALPAPTGQNTQVSSHRLDTGEVPALQAAEIGASSNTSDESMIETRCVLNSHSTAETTLDSFFSRAGLVGEIDLPLEGTTNPNGYANWDIDITGYAQMRRKVELFTYMRFDAEFTFVACTPTGEVVPQLLQYMFVPPGAPKPESRESLAWQTATNPSVFVKLTDPPAQVSVPFMSPASAYQWFYDGYPTFGEHKQEKDLEYGACPNNMMGTFSVRTVGSSKSKYPLVVRIYMRMKHVRAWIPRPMRNQNYLFKANPNYAGNSIKPTGTSRNAITTLGKFGQQSGAIYVGNFRVVNRHLATHNDWANLVWEDSSRDLLVSSTTAQGCDTIARCNCQTGVYYCNSKRKHYPVSFSKPSLIYVEASEYYPARYQSHLMLAAGHSESGDCGGILRCQHGVVGIASTGGNGLVGFADVRDLLWLDEEAMEQGVSDYIKGLGDAFGTGFTDAVSREVEALRNHLIGSDGAVEKILKNLIKLISALVIVIRSDYDMVTLTATLALIGCHGSPWAWIKAKTASILGIPIAQKQSASWLKKFNDMASAAKGLEWISNKISKFIDWLREKIVPAAKEKAEFLTNLKQFPLLENQITHLEQSAASQEDLEAMFGNVSYLAHFCRKFQPLYATEAKRVYVLEKRMNNYMQFKSTHRIEPVCLIIRGSPGTGKSLATGIIARAIADKYHSSVYSLPPDPDHFDGYKQQVVTVMDDLCQNPDGKDMSLFYQMVSTVDIIPPMASLEEKGVSFTSKFVIASTNASNIIVPTVSDSDAIRRRFYMDCDIEVTDSSKTDLGRLDAGRAAKLCSENNTANFKRCSPLVCGKAIQLRDRKSKVRYSVDTVVSELIREYNSRSAIGNTIEALFQGPPKFRPIRISLEEKPAPDAISDLLASVDSEEVRQYCREQGWIIPETPTNVERHLNRAVLVMQSIATVVAVVSLVYVIYKLFAGFQGAYSGAPNQVLKKPVLRTATVQGPSLDFALSLLRRNIRQVQTDQGHFTMLGVRDRLAVLPRHSQPGKTIWVEHKLVNILDAAELVDEQGVNLELTLVTLDTNEKFRDITKFIPETISGASDATLVINTEHMPSMFVPVGDVVQYGFLNLSGKPTHRTMMYNFPTKAGQCGGVVTSVGKIIGIHIGGNGRQGFCAGLKRSYFASEQGEIQWVKSNKETGRLNINGPTRTKLEPSVFHDVFEANKEPAVLTSKDPRLEVDFEQALFSKYVGNVLHEPDEYVHQAALHYANQLKQLDINTKKMSMEEACYGTDNLEAIDLHTSAGYPYSALGIKKRDILDPATRDVSKMKSYMDKYGLDLPYSTYVKDELRSLDKIKKGKSRLIEASSLNDSVYLRMTFGHLYEVFHANPGTVTGSAVGCNPDVFWSKLPILLPGSLFAFDYSGYDASLSPVWFRALEVVLREIGYSEEAVSLIEGINHTHHIYRNKTYCVLGGMPSGCSGTSIFNSMINNIIIRTLLIKTFKGIDLDELNMVAYGDDVLASYPFPIDCLELAKTGKEYGLTMTPAGKSPCFNEVTWENATFLKRGFLPDHQFPFLIHPTMPMKEIHESIRWTKDARNTQDHVRSLCLLAWHNGKDEYEKFVSTIRSVPVGKALAIPNFENLRRNWLELF</sequence>
<dbReference type="EC" id="3.4.22.29" evidence="2"/>
<dbReference type="EC" id="3.6.1.15" evidence="2"/>
<dbReference type="EC" id="3.4.22.28" evidence="11"/>
<dbReference type="EC" id="2.7.7.48" evidence="9"/>
<dbReference type="EMBL" id="U22522">
    <property type="protein sequence ID" value="AAB39969.1"/>
    <property type="molecule type" value="Genomic_RNA"/>
</dbReference>
<dbReference type="PDB" id="3W95">
    <property type="method" value="X-ray"/>
    <property type="resolution" value="1.85 A"/>
    <property type="chains" value="A=863-1012"/>
</dbReference>
<dbReference type="PDB" id="6HLW">
    <property type="method" value="X-ray"/>
    <property type="resolution" value="2.73 A"/>
    <property type="chains" value="B/D=1455-1497"/>
</dbReference>
<dbReference type="PDB" id="6I2K">
    <property type="method" value="EM"/>
    <property type="resolution" value="3.40 A"/>
    <property type="chains" value="A=566-862, B=70-323, C=324-565, D=12-69"/>
</dbReference>
<dbReference type="PDBsum" id="3W95"/>
<dbReference type="PDBsum" id="6HLW"/>
<dbReference type="PDBsum" id="6I2K"/>
<dbReference type="EMDB" id="EMD-0332"/>
<dbReference type="SMR" id="Q66479"/>
<dbReference type="MEROPS" id="C03.014"/>
<dbReference type="MEROPS" id="N08.001"/>
<dbReference type="ABCD" id="Q66479">
    <property type="antibodies" value="3 sequenced antibodies"/>
</dbReference>
<dbReference type="BRENDA" id="3.4.22.29">
    <property type="organism ID" value="9653"/>
</dbReference>
<dbReference type="EvolutionaryTrace" id="Q66479"/>
<dbReference type="Proteomes" id="UP000008117">
    <property type="component" value="Genome"/>
</dbReference>
<dbReference type="GO" id="GO:0044162">
    <property type="term" value="C:host cell cytoplasmic vesicle membrane"/>
    <property type="evidence" value="ECO:0007669"/>
    <property type="project" value="UniProtKB-SubCell"/>
</dbReference>
<dbReference type="GO" id="GO:0042025">
    <property type="term" value="C:host cell nucleus"/>
    <property type="evidence" value="ECO:0007669"/>
    <property type="project" value="UniProtKB-SubCell"/>
</dbReference>
<dbReference type="GO" id="GO:0016020">
    <property type="term" value="C:membrane"/>
    <property type="evidence" value="ECO:0007669"/>
    <property type="project" value="UniProtKB-KW"/>
</dbReference>
<dbReference type="GO" id="GO:0039618">
    <property type="term" value="C:T=pseudo3 icosahedral viral capsid"/>
    <property type="evidence" value="ECO:0007669"/>
    <property type="project" value="UniProtKB-KW"/>
</dbReference>
<dbReference type="GO" id="GO:0005524">
    <property type="term" value="F:ATP binding"/>
    <property type="evidence" value="ECO:0007669"/>
    <property type="project" value="UniProtKB-KW"/>
</dbReference>
<dbReference type="GO" id="GO:0015267">
    <property type="term" value="F:channel activity"/>
    <property type="evidence" value="ECO:0007669"/>
    <property type="project" value="UniProtKB-KW"/>
</dbReference>
<dbReference type="GO" id="GO:0004197">
    <property type="term" value="F:cysteine-type endopeptidase activity"/>
    <property type="evidence" value="ECO:0007669"/>
    <property type="project" value="UniProtKB-EC"/>
</dbReference>
<dbReference type="GO" id="GO:0017111">
    <property type="term" value="F:ribonucleoside triphosphate phosphatase activity"/>
    <property type="evidence" value="ECO:0007669"/>
    <property type="project" value="UniProtKB-EC"/>
</dbReference>
<dbReference type="GO" id="GO:0003723">
    <property type="term" value="F:RNA binding"/>
    <property type="evidence" value="ECO:0007669"/>
    <property type="project" value="UniProtKB-KW"/>
</dbReference>
<dbReference type="GO" id="GO:0003724">
    <property type="term" value="F:RNA helicase activity"/>
    <property type="evidence" value="ECO:0007669"/>
    <property type="project" value="InterPro"/>
</dbReference>
<dbReference type="GO" id="GO:0003968">
    <property type="term" value="F:RNA-directed RNA polymerase activity"/>
    <property type="evidence" value="ECO:0007669"/>
    <property type="project" value="UniProtKB-KW"/>
</dbReference>
<dbReference type="GO" id="GO:0005198">
    <property type="term" value="F:structural molecule activity"/>
    <property type="evidence" value="ECO:0007669"/>
    <property type="project" value="InterPro"/>
</dbReference>
<dbReference type="GO" id="GO:0008270">
    <property type="term" value="F:zinc ion binding"/>
    <property type="evidence" value="ECO:0007669"/>
    <property type="project" value="UniProtKB-KW"/>
</dbReference>
<dbReference type="GO" id="GO:0075512">
    <property type="term" value="P:clathrin-dependent endocytosis of virus by host cell"/>
    <property type="evidence" value="ECO:0007669"/>
    <property type="project" value="UniProtKB-KW"/>
</dbReference>
<dbReference type="GO" id="GO:0006260">
    <property type="term" value="P:DNA replication"/>
    <property type="evidence" value="ECO:0007669"/>
    <property type="project" value="UniProtKB-KW"/>
</dbReference>
<dbReference type="GO" id="GO:0006351">
    <property type="term" value="P:DNA-templated transcription"/>
    <property type="evidence" value="ECO:0007669"/>
    <property type="project" value="InterPro"/>
</dbReference>
<dbReference type="GO" id="GO:0098670">
    <property type="term" value="P:entry receptor-mediated virion attachment to host cell"/>
    <property type="evidence" value="ECO:0007669"/>
    <property type="project" value="UniProtKB-KW"/>
</dbReference>
<dbReference type="GO" id="GO:0034220">
    <property type="term" value="P:monoatomic ion transmembrane transport"/>
    <property type="evidence" value="ECO:0007669"/>
    <property type="project" value="UniProtKB-KW"/>
</dbReference>
<dbReference type="GO" id="GO:0006508">
    <property type="term" value="P:proteolysis"/>
    <property type="evidence" value="ECO:0007669"/>
    <property type="project" value="UniProtKB-KW"/>
</dbReference>
<dbReference type="GO" id="GO:0044694">
    <property type="term" value="P:symbiont genome entry into host cell via pore formation in plasma membrane"/>
    <property type="evidence" value="ECO:0007669"/>
    <property type="project" value="UniProtKB-KW"/>
</dbReference>
<dbReference type="GO" id="GO:0039520">
    <property type="term" value="P:symbiont-mediated activation of host autophagy"/>
    <property type="evidence" value="ECO:0000250"/>
    <property type="project" value="UniProtKB"/>
</dbReference>
<dbReference type="GO" id="GO:0039545">
    <property type="term" value="P:symbiont-mediated suppression of host cytoplasmic pattern recognition receptor signaling pathway via inhibition of MAVS activity"/>
    <property type="evidence" value="ECO:0007669"/>
    <property type="project" value="UniProtKB-KW"/>
</dbReference>
<dbReference type="GO" id="GO:0039554">
    <property type="term" value="P:symbiont-mediated suppression of host cytoplasmic pattern recognition receptor signaling pathway via inhibition of MDA-5 activity"/>
    <property type="evidence" value="ECO:0007669"/>
    <property type="project" value="UniProtKB-KW"/>
</dbReference>
<dbReference type="GO" id="GO:0039540">
    <property type="term" value="P:symbiont-mediated suppression of host cytoplasmic pattern recognition receptor signaling pathway via inhibition of RIG-I activity"/>
    <property type="evidence" value="ECO:0007669"/>
    <property type="project" value="UniProtKB-KW"/>
</dbReference>
<dbReference type="GO" id="GO:0039522">
    <property type="term" value="P:symbiont-mediated suppression of host mRNA export from nucleus"/>
    <property type="evidence" value="ECO:0007669"/>
    <property type="project" value="UniProtKB-KW"/>
</dbReference>
<dbReference type="GO" id="GO:0039694">
    <property type="term" value="P:viral RNA genome replication"/>
    <property type="evidence" value="ECO:0007669"/>
    <property type="project" value="InterPro"/>
</dbReference>
<dbReference type="CDD" id="cd23213">
    <property type="entry name" value="Enterovirus_RdRp"/>
    <property type="match status" value="1"/>
</dbReference>
<dbReference type="CDD" id="cd00205">
    <property type="entry name" value="rhv_like"/>
    <property type="match status" value="3"/>
</dbReference>
<dbReference type="FunFam" id="1.20.960.20:FF:000001">
    <property type="entry name" value="Genome polyprotein"/>
    <property type="match status" value="1"/>
</dbReference>
<dbReference type="FunFam" id="2.40.10.10:FF:000018">
    <property type="entry name" value="Genome polyprotein"/>
    <property type="match status" value="1"/>
</dbReference>
<dbReference type="FunFam" id="2.40.10.10:FF:000020">
    <property type="entry name" value="Genome polyprotein"/>
    <property type="match status" value="1"/>
</dbReference>
<dbReference type="FunFam" id="2.40.10.10:FF:000022">
    <property type="entry name" value="Genome polyprotein"/>
    <property type="match status" value="1"/>
</dbReference>
<dbReference type="FunFam" id="2.60.120.20:FF:000001">
    <property type="entry name" value="Genome polyprotein"/>
    <property type="match status" value="1"/>
</dbReference>
<dbReference type="FunFam" id="2.60.120.20:FF:000002">
    <property type="entry name" value="Genome polyprotein"/>
    <property type="match status" value="1"/>
</dbReference>
<dbReference type="FunFam" id="2.60.120.20:FF:000003">
    <property type="entry name" value="Genome polyprotein"/>
    <property type="match status" value="1"/>
</dbReference>
<dbReference type="FunFam" id="3.30.70.270:FF:000008">
    <property type="entry name" value="Genome polyprotein"/>
    <property type="match status" value="1"/>
</dbReference>
<dbReference type="FunFam" id="4.10.880.10:FF:000001">
    <property type="entry name" value="Genome polyprotein"/>
    <property type="match status" value="1"/>
</dbReference>
<dbReference type="FunFam" id="4.10.880.10:FF:000002">
    <property type="entry name" value="Genome polyprotein"/>
    <property type="match status" value="1"/>
</dbReference>
<dbReference type="Gene3D" id="1.20.960.20">
    <property type="match status" value="1"/>
</dbReference>
<dbReference type="Gene3D" id="2.60.120.20">
    <property type="match status" value="3"/>
</dbReference>
<dbReference type="Gene3D" id="3.30.70.270">
    <property type="match status" value="1"/>
</dbReference>
<dbReference type="Gene3D" id="6.10.20.20">
    <property type="entry name" value="Poliovirus 3A protein-like"/>
    <property type="match status" value="1"/>
</dbReference>
<dbReference type="Gene3D" id="4.10.880.10">
    <property type="entry name" value="Poliovirus 3D polymerase Domain 1 (Nucleotidyltransferase)"/>
    <property type="match status" value="2"/>
</dbReference>
<dbReference type="Gene3D" id="2.40.10.10">
    <property type="entry name" value="Trypsin-like serine proteases"/>
    <property type="match status" value="4"/>
</dbReference>
<dbReference type="InterPro" id="IPR043502">
    <property type="entry name" value="DNA/RNA_pol_sf"/>
</dbReference>
<dbReference type="InterPro" id="IPR000605">
    <property type="entry name" value="Helicase_SF3_ssDNA/RNA_vir"/>
</dbReference>
<dbReference type="InterPro" id="IPR014759">
    <property type="entry name" value="Helicase_SF3_ssRNA_vir"/>
</dbReference>
<dbReference type="InterPro" id="IPR027417">
    <property type="entry name" value="P-loop_NTPase"/>
</dbReference>
<dbReference type="InterPro" id="IPR014838">
    <property type="entry name" value="P3A"/>
</dbReference>
<dbReference type="InterPro" id="IPR036203">
    <property type="entry name" value="P3A_soluble_dom"/>
</dbReference>
<dbReference type="InterPro" id="IPR044067">
    <property type="entry name" value="PCV_3C_PRO"/>
</dbReference>
<dbReference type="InterPro" id="IPR000081">
    <property type="entry name" value="Peptidase_C3"/>
</dbReference>
<dbReference type="InterPro" id="IPR000199">
    <property type="entry name" value="Peptidase_C3A/C3B_picornavir"/>
</dbReference>
<dbReference type="InterPro" id="IPR009003">
    <property type="entry name" value="Peptidase_S1_PA"/>
</dbReference>
<dbReference type="InterPro" id="IPR043504">
    <property type="entry name" value="Peptidase_S1_PA_chymotrypsin"/>
</dbReference>
<dbReference type="InterPro" id="IPR003138">
    <property type="entry name" value="Pico_P1A"/>
</dbReference>
<dbReference type="InterPro" id="IPR002527">
    <property type="entry name" value="Pico_P2B"/>
</dbReference>
<dbReference type="InterPro" id="IPR001676">
    <property type="entry name" value="Picornavirus_capsid"/>
</dbReference>
<dbReference type="InterPro" id="IPR043128">
    <property type="entry name" value="Rev_trsase/Diguanyl_cyclase"/>
</dbReference>
<dbReference type="InterPro" id="IPR033703">
    <property type="entry name" value="Rhv-like"/>
</dbReference>
<dbReference type="InterPro" id="IPR001205">
    <property type="entry name" value="RNA-dir_pol_C"/>
</dbReference>
<dbReference type="InterPro" id="IPR007094">
    <property type="entry name" value="RNA-dir_pol_PSvirus"/>
</dbReference>
<dbReference type="InterPro" id="IPR029053">
    <property type="entry name" value="Viral_coat"/>
</dbReference>
<dbReference type="Pfam" id="PF08727">
    <property type="entry name" value="P3A"/>
    <property type="match status" value="1"/>
</dbReference>
<dbReference type="Pfam" id="PF00548">
    <property type="entry name" value="Peptidase_C3"/>
    <property type="match status" value="1"/>
</dbReference>
<dbReference type="Pfam" id="PF02226">
    <property type="entry name" value="Pico_P1A"/>
    <property type="match status" value="1"/>
</dbReference>
<dbReference type="Pfam" id="PF00947">
    <property type="entry name" value="Pico_P2A"/>
    <property type="match status" value="1"/>
</dbReference>
<dbReference type="Pfam" id="PF01552">
    <property type="entry name" value="Pico_P2B"/>
    <property type="match status" value="1"/>
</dbReference>
<dbReference type="Pfam" id="PF00680">
    <property type="entry name" value="RdRP_1"/>
    <property type="match status" value="1"/>
</dbReference>
<dbReference type="Pfam" id="PF00073">
    <property type="entry name" value="Rhv"/>
    <property type="match status" value="2"/>
</dbReference>
<dbReference type="Pfam" id="PF22663">
    <property type="entry name" value="Rhv_5"/>
    <property type="match status" value="1"/>
</dbReference>
<dbReference type="Pfam" id="PF00910">
    <property type="entry name" value="RNA_helicase"/>
    <property type="match status" value="1"/>
</dbReference>
<dbReference type="SUPFAM" id="SSF56672">
    <property type="entry name" value="DNA/RNA polymerases"/>
    <property type="match status" value="1"/>
</dbReference>
<dbReference type="SUPFAM" id="SSF52540">
    <property type="entry name" value="P-loop containing nucleoside triphosphate hydrolases"/>
    <property type="match status" value="1"/>
</dbReference>
<dbReference type="SUPFAM" id="SSF88633">
    <property type="entry name" value="Positive stranded ssRNA viruses"/>
    <property type="match status" value="2"/>
</dbReference>
<dbReference type="SUPFAM" id="SSF89043">
    <property type="entry name" value="Soluble domain of poliovirus core protein 3a"/>
    <property type="match status" value="1"/>
</dbReference>
<dbReference type="SUPFAM" id="SSF50494">
    <property type="entry name" value="Trypsin-like serine proteases"/>
    <property type="match status" value="2"/>
</dbReference>
<dbReference type="PROSITE" id="PS51874">
    <property type="entry name" value="PCV_3C_PRO"/>
    <property type="match status" value="1"/>
</dbReference>
<dbReference type="PROSITE" id="PS50507">
    <property type="entry name" value="RDRP_SSRNA_POS"/>
    <property type="match status" value="1"/>
</dbReference>
<dbReference type="PROSITE" id="PS51218">
    <property type="entry name" value="SF3_HELICASE_2"/>
    <property type="match status" value="1"/>
</dbReference>
<proteinExistence type="evidence at protein level"/>
<name>POLG_HE71M</name>
<accession>Q66479</accession>
<organismHost>
    <name type="scientific">Homo sapiens</name>
    <name type="common">Human</name>
    <dbReference type="NCBI Taxonomy" id="9606"/>
</organismHost>
<feature type="initiator methionine" description="Removed; by host" evidence="2">
    <location>
        <position position="1"/>
    </location>
</feature>
<feature type="chain" id="PRO_0000426150" description="Genome polyprotein">
    <location>
        <begin position="2"/>
        <end position="2193"/>
    </location>
</feature>
<feature type="chain" id="PRO_0000426151" description="P1">
    <location>
        <begin position="2"/>
        <end position="862"/>
    </location>
</feature>
<feature type="chain" id="PRO_0000426152" description="Capsid protein VP0">
    <location>
        <begin position="2"/>
        <end position="323"/>
    </location>
</feature>
<feature type="chain" id="PRO_0000426153" description="Capsid protein VP4">
    <location>
        <begin position="2"/>
        <end position="69"/>
    </location>
</feature>
<feature type="chain" id="PRO_0000426154" description="Capsid protein VP2">
    <location>
        <begin position="70"/>
        <end position="323"/>
    </location>
</feature>
<feature type="chain" id="PRO_0000426155" description="Capsid protein VP3">
    <location>
        <begin position="324"/>
        <end position="565"/>
    </location>
</feature>
<feature type="chain" id="PRO_0000426156" description="Capsid protein VP1">
    <location>
        <begin position="566"/>
        <end position="862"/>
    </location>
</feature>
<feature type="chain" id="PRO_0000426157" description="P2">
    <location>
        <begin position="863"/>
        <end position="1440"/>
    </location>
</feature>
<feature type="chain" id="PRO_0000039496" description="Protease 2A">
    <location>
        <begin position="863"/>
        <end position="1012"/>
    </location>
</feature>
<feature type="chain" id="PRO_0000039497" description="Protein 2B">
    <location>
        <begin position="1013"/>
        <end position="1111"/>
    </location>
</feature>
<feature type="chain" id="PRO_0000039498" description="Protein 2C">
    <location>
        <begin position="1112"/>
        <end position="1440"/>
    </location>
</feature>
<feature type="chain" id="PRO_0000426158" description="P3">
    <location>
        <begin position="1441"/>
        <end position="2193"/>
    </location>
</feature>
<feature type="chain" id="PRO_0000426159" description="Protein 3AB">
    <location>
        <begin position="1441"/>
        <end position="1548"/>
    </location>
</feature>
<feature type="chain" id="PRO_0000039499" description="Protein 3A">
    <location>
        <begin position="1441"/>
        <end position="1526"/>
    </location>
</feature>
<feature type="chain" id="PRO_0000426160" description="Viral protein genome-linked">
    <location>
        <begin position="1527"/>
        <end position="1548"/>
    </location>
</feature>
<feature type="chain" id="PRO_0000426161" description="Protein 3CD">
    <location>
        <begin position="1549"/>
        <end position="2193"/>
    </location>
</feature>
<feature type="chain" id="PRO_0000426162" description="Protease 3C">
    <location>
        <begin position="1549"/>
        <end position="1731"/>
    </location>
</feature>
<feature type="chain" id="PRO_0000426163" description="RNA-directed RNA polymerase">
    <location>
        <begin position="1732"/>
        <end position="2193"/>
    </location>
</feature>
<feature type="topological domain" description="Cytoplasmic" evidence="8">
    <location>
        <begin position="2"/>
        <end position="1503"/>
    </location>
</feature>
<feature type="intramembrane region" evidence="8">
    <location>
        <begin position="1504"/>
        <end position="1519"/>
    </location>
</feature>
<feature type="topological domain" description="Cytoplasmic" evidence="8">
    <location>
        <begin position="1520"/>
        <end position="2193"/>
    </location>
</feature>
<feature type="domain" description="SF3 helicase" evidence="10">
    <location>
        <begin position="1216"/>
        <end position="1374"/>
    </location>
</feature>
<feature type="domain" description="Peptidase C3" evidence="11">
    <location>
        <begin position="1549"/>
        <end position="1727"/>
    </location>
</feature>
<feature type="domain" description="RdRp catalytic" evidence="9">
    <location>
        <begin position="1958"/>
        <end position="2073"/>
    </location>
</feature>
<feature type="zinc finger region" description="C4-type; degenerate" evidence="1">
    <location>
        <begin position="1381"/>
        <end position="1397"/>
    </location>
</feature>
<feature type="region of interest" description="Disordered" evidence="12">
    <location>
        <begin position="1"/>
        <end position="22"/>
    </location>
</feature>
<feature type="region of interest" description="Amphipathic alpha-helix" evidence="8">
    <location>
        <begin position="568"/>
        <end position="588"/>
    </location>
</feature>
<feature type="active site" description="For protease 2A activity" evidence="2">
    <location>
        <position position="883"/>
    </location>
</feature>
<feature type="active site" description="For protease 2A activity" evidence="2">
    <location>
        <position position="901"/>
    </location>
</feature>
<feature type="active site" description="For protease 2A activity" evidence="2">
    <location>
        <position position="972"/>
    </location>
</feature>
<feature type="active site" description="For protease 3C activity" evidence="11">
    <location>
        <position position="1588"/>
    </location>
</feature>
<feature type="active site" description="For protease 3C activity" evidence="11">
    <location>
        <position position="1619"/>
    </location>
</feature>
<feature type="active site" description="For protease 3C activity" evidence="11">
    <location>
        <position position="1695"/>
    </location>
</feature>
<feature type="binding site" evidence="13">
    <location>
        <position position="918"/>
    </location>
    <ligand>
        <name>Zn(2+)</name>
        <dbReference type="ChEBI" id="CHEBI:29105"/>
        <label>1</label>
        <note>structural</note>
    </ligand>
</feature>
<feature type="binding site" evidence="13">
    <location>
        <position position="920"/>
    </location>
    <ligand>
        <name>Zn(2+)</name>
        <dbReference type="ChEBI" id="CHEBI:29105"/>
        <label>1</label>
        <note>structural</note>
    </ligand>
</feature>
<feature type="binding site" evidence="13">
    <location>
        <position position="978"/>
    </location>
    <ligand>
        <name>Zn(2+)</name>
        <dbReference type="ChEBI" id="CHEBI:29105"/>
        <label>1</label>
        <note>structural</note>
    </ligand>
</feature>
<feature type="binding site" evidence="13">
    <location>
        <position position="980"/>
    </location>
    <ligand>
        <name>Zn(2+)</name>
        <dbReference type="ChEBI" id="CHEBI:29105"/>
        <label>1</label>
        <note>structural</note>
    </ligand>
</feature>
<feature type="binding site" evidence="10">
    <location>
        <begin position="1240"/>
        <end position="1247"/>
    </location>
    <ligand>
        <name>ATP</name>
        <dbReference type="ChEBI" id="CHEBI:30616"/>
    </ligand>
</feature>
<feature type="binding site" evidence="1">
    <location>
        <position position="1381"/>
    </location>
    <ligand>
        <name>Zn(2+)</name>
        <dbReference type="ChEBI" id="CHEBI:29105"/>
        <label>2</label>
    </ligand>
</feature>
<feature type="binding site" evidence="1">
    <location>
        <position position="1392"/>
    </location>
    <ligand>
        <name>Zn(2+)</name>
        <dbReference type="ChEBI" id="CHEBI:29105"/>
        <label>2</label>
    </ligand>
</feature>
<feature type="binding site" evidence="1">
    <location>
        <position position="1397"/>
    </location>
    <ligand>
        <name>Zn(2+)</name>
        <dbReference type="ChEBI" id="CHEBI:29105"/>
        <label>2</label>
    </ligand>
</feature>
<feature type="binding site" evidence="2">
    <location>
        <position position="1964"/>
    </location>
    <ligand>
        <name>Mg(2+)</name>
        <dbReference type="ChEBI" id="CHEBI:18420"/>
        <label>1</label>
        <note>catalytic; for RdRp activity</note>
    </ligand>
</feature>
<feature type="binding site" evidence="2">
    <location>
        <position position="1964"/>
    </location>
    <ligand>
        <name>Mg(2+)</name>
        <dbReference type="ChEBI" id="CHEBI:18420"/>
        <label>2</label>
        <note>catalytic; for RdRp activity</note>
    </ligand>
</feature>
<feature type="binding site" evidence="2">
    <location>
        <position position="2060"/>
    </location>
    <ligand>
        <name>Mg(2+)</name>
        <dbReference type="ChEBI" id="CHEBI:18420"/>
        <label>1</label>
        <note>catalytic; for RdRp activity</note>
    </ligand>
</feature>
<feature type="binding site" evidence="2">
    <location>
        <position position="2060"/>
    </location>
    <ligand>
        <name>Mg(2+)</name>
        <dbReference type="ChEBI" id="CHEBI:18420"/>
        <label>2</label>
        <note>catalytic; for RdRp activity</note>
    </ligand>
</feature>
<feature type="site" description="Cleavage; by autolysis" evidence="2">
    <location>
        <begin position="69"/>
        <end position="70"/>
    </location>
</feature>
<feature type="site" description="Cleavage; by protease 3C" evidence="3">
    <location>
        <begin position="323"/>
        <end position="324"/>
    </location>
</feature>
<feature type="site" description="Cleavage; by autolysis" evidence="3">
    <location>
        <begin position="862"/>
        <end position="863"/>
    </location>
</feature>
<feature type="site" description="Cleavage; by protease 3C" evidence="3">
    <location>
        <begin position="1012"/>
        <end position="1013"/>
    </location>
</feature>
<feature type="site" description="Cleavage; by protease 3C" evidence="3">
    <location>
        <begin position="1111"/>
        <end position="1112"/>
    </location>
</feature>
<feature type="site" description="Involved in the interaction with host RTN3" evidence="6">
    <location>
        <position position="1136"/>
    </location>
</feature>
<feature type="site" description="Cleavage; by protease 3C" evidence="3">
    <location>
        <begin position="1440"/>
        <end position="1441"/>
    </location>
</feature>
<feature type="site" description="Cleavage; by protease 3C" evidence="3">
    <location>
        <begin position="1526"/>
        <end position="1527"/>
    </location>
</feature>
<feature type="site" description="Cleavage; by protease 3C" evidence="3">
    <location>
        <begin position="1548"/>
        <end position="1549"/>
    </location>
</feature>
<feature type="site" description="Cleavage; by protease 3C" evidence="3">
    <location>
        <begin position="1731"/>
        <end position="1732"/>
    </location>
</feature>
<feature type="modified residue" description="O-(5'-phospho-RNA)-tyrosine" evidence="2">
    <location>
        <position position="1529"/>
    </location>
</feature>
<feature type="lipid moiety-binding region" description="N-myristoyl glycine; by host" evidence="2">
    <location>
        <position position="2"/>
    </location>
</feature>
<feature type="strand" evidence="23">
    <location>
        <begin position="23"/>
        <end position="25"/>
    </location>
</feature>
<feature type="strand" evidence="23">
    <location>
        <begin position="33"/>
        <end position="35"/>
    </location>
</feature>
<feature type="helix" evidence="23">
    <location>
        <begin position="36"/>
        <end position="38"/>
    </location>
</feature>
<feature type="helix" evidence="23">
    <location>
        <begin position="50"/>
        <end position="52"/>
    </location>
</feature>
<feature type="strand" evidence="23">
    <location>
        <begin position="57"/>
        <end position="59"/>
    </location>
</feature>
<feature type="strand" evidence="23">
    <location>
        <begin position="63"/>
        <end position="65"/>
    </location>
</feature>
<feature type="strand" evidence="23">
    <location>
        <begin position="83"/>
        <end position="87"/>
    </location>
</feature>
<feature type="strand" evidence="23">
    <location>
        <begin position="90"/>
        <end position="96"/>
    </location>
</feature>
<feature type="helix" evidence="23">
    <location>
        <begin position="103"/>
        <end position="105"/>
    </location>
</feature>
<feature type="turn" evidence="23">
    <location>
        <begin position="113"/>
        <end position="115"/>
    </location>
</feature>
<feature type="turn" evidence="23">
    <location>
        <begin position="126"/>
        <end position="129"/>
    </location>
</feature>
<feature type="strand" evidence="23">
    <location>
        <begin position="133"/>
        <end position="139"/>
    </location>
</feature>
<feature type="strand" evidence="23">
    <location>
        <begin position="147"/>
        <end position="151"/>
    </location>
</feature>
<feature type="turn" evidence="23">
    <location>
        <begin position="152"/>
        <end position="154"/>
    </location>
</feature>
<feature type="helix" evidence="23">
    <location>
        <begin position="159"/>
        <end position="167"/>
    </location>
</feature>
<feature type="strand" evidence="23">
    <location>
        <begin position="168"/>
        <end position="180"/>
    </location>
</feature>
<feature type="strand" evidence="23">
    <location>
        <begin position="188"/>
        <end position="197"/>
    </location>
</feature>
<feature type="turn" evidence="23">
    <location>
        <begin position="205"/>
        <end position="209"/>
    </location>
</feature>
<feature type="helix" evidence="23">
    <location>
        <begin position="217"/>
        <end position="220"/>
    </location>
</feature>
<feature type="helix" evidence="23">
    <location>
        <begin position="223"/>
        <end position="225"/>
    </location>
</feature>
<feature type="turn" evidence="23">
    <location>
        <begin position="232"/>
        <end position="238"/>
    </location>
</feature>
<feature type="helix" evidence="23">
    <location>
        <begin position="241"/>
        <end position="246"/>
    </location>
</feature>
<feature type="strand" evidence="23">
    <location>
        <begin position="247"/>
        <end position="253"/>
    </location>
</feature>
<feature type="turn" evidence="23">
    <location>
        <begin position="254"/>
        <end position="256"/>
    </location>
</feature>
<feature type="strand" evidence="23">
    <location>
        <begin position="258"/>
        <end position="264"/>
    </location>
</feature>
<feature type="strand" evidence="23">
    <location>
        <begin position="269"/>
        <end position="274"/>
    </location>
</feature>
<feature type="turn" evidence="23">
    <location>
        <begin position="275"/>
        <end position="277"/>
    </location>
</feature>
<feature type="strand" evidence="23">
    <location>
        <begin position="281"/>
        <end position="292"/>
    </location>
</feature>
<feature type="strand" evidence="23">
    <location>
        <begin position="302"/>
        <end position="317"/>
    </location>
</feature>
<feature type="strand" evidence="23">
    <location>
        <begin position="345"/>
        <end position="348"/>
    </location>
</feature>
<feature type="strand" evidence="23">
    <location>
        <begin position="360"/>
        <end position="365"/>
    </location>
</feature>
<feature type="turn" evidence="23">
    <location>
        <begin position="366"/>
        <end position="368"/>
    </location>
</feature>
<feature type="helix" evidence="23">
    <location>
        <begin position="369"/>
        <end position="371"/>
    </location>
</feature>
<feature type="helix" evidence="23">
    <location>
        <begin position="385"/>
        <end position="392"/>
    </location>
</feature>
<feature type="strand" evidence="23">
    <location>
        <begin position="393"/>
        <end position="397"/>
    </location>
</feature>
<feature type="strand" evidence="23">
    <location>
        <begin position="400"/>
        <end position="402"/>
    </location>
</feature>
<feature type="strand" evidence="23">
    <location>
        <begin position="405"/>
        <end position="410"/>
    </location>
</feature>
<feature type="strand" evidence="23">
    <location>
        <begin position="413"/>
        <end position="417"/>
    </location>
</feature>
<feature type="helix" evidence="23">
    <location>
        <begin position="418"/>
        <end position="420"/>
    </location>
</feature>
<feature type="helix" evidence="23">
    <location>
        <begin position="423"/>
        <end position="427"/>
    </location>
</feature>
<feature type="helix" evidence="23">
    <location>
        <begin position="428"/>
        <end position="430"/>
    </location>
</feature>
<feature type="strand" evidence="23">
    <location>
        <begin position="431"/>
        <end position="436"/>
    </location>
</feature>
<feature type="strand" evidence="23">
    <location>
        <begin position="438"/>
        <end position="444"/>
    </location>
</feature>
<feature type="strand" evidence="23">
    <location>
        <begin position="451"/>
        <end position="459"/>
    </location>
</feature>
<feature type="helix" evidence="23">
    <location>
        <begin position="469"/>
        <end position="472"/>
    </location>
</feature>
<feature type="strand" evidence="23">
    <location>
        <begin position="475"/>
        <end position="481"/>
    </location>
</feature>
<feature type="strand" evidence="23">
    <location>
        <begin position="483"/>
        <end position="485"/>
    </location>
</feature>
<feature type="strand" evidence="23">
    <location>
        <begin position="487"/>
        <end position="492"/>
    </location>
</feature>
<feature type="strand" evidence="23">
    <location>
        <begin position="497"/>
        <end position="502"/>
    </location>
</feature>
<feature type="helix" evidence="23">
    <location>
        <begin position="508"/>
        <end position="512"/>
    </location>
</feature>
<feature type="strand" evidence="23">
    <location>
        <begin position="516"/>
        <end position="526"/>
    </location>
</feature>
<feature type="strand" evidence="23">
    <location>
        <begin position="533"/>
        <end position="543"/>
    </location>
</feature>
<feature type="strand" evidence="23">
    <location>
        <begin position="548"/>
        <end position="552"/>
    </location>
</feature>
<feature type="strand" evidence="23">
    <location>
        <begin position="570"/>
        <end position="572"/>
    </location>
</feature>
<feature type="strand" evidence="23">
    <location>
        <begin position="610"/>
        <end position="613"/>
    </location>
</feature>
<feature type="helix" evidence="23">
    <location>
        <begin position="615"/>
        <end position="617"/>
    </location>
</feature>
<feature type="turn" evidence="23">
    <location>
        <begin position="626"/>
        <end position="628"/>
    </location>
</feature>
<feature type="helix" evidence="23">
    <location>
        <begin position="645"/>
        <end position="648"/>
    </location>
</feature>
<feature type="strand" evidence="23">
    <location>
        <begin position="653"/>
        <end position="660"/>
    </location>
</feature>
<feature type="strand" evidence="23">
    <location>
        <begin position="662"/>
        <end position="667"/>
    </location>
</feature>
<feature type="strand" evidence="23">
    <location>
        <begin position="670"/>
        <end position="674"/>
    </location>
</feature>
<feature type="helix" evidence="23">
    <location>
        <begin position="684"/>
        <end position="688"/>
    </location>
</feature>
<feature type="strand" evidence="23">
    <location>
        <begin position="690"/>
        <end position="705"/>
    </location>
</feature>
<feature type="strand" evidence="23">
    <location>
        <begin position="715"/>
        <end position="721"/>
    </location>
</feature>
<feature type="helix" evidence="23">
    <location>
        <begin position="735"/>
        <end position="737"/>
    </location>
</feature>
<feature type="strand" evidence="23">
    <location>
        <begin position="739"/>
        <end position="741"/>
    </location>
</feature>
<feature type="strand" evidence="23">
    <location>
        <begin position="743"/>
        <end position="747"/>
    </location>
</feature>
<feature type="strand" evidence="23">
    <location>
        <begin position="753"/>
        <end position="757"/>
    </location>
</feature>
<feature type="strand" evidence="23">
    <location>
        <begin position="762"/>
        <end position="768"/>
    </location>
</feature>
<feature type="turn" evidence="23">
    <location>
        <begin position="785"/>
        <end position="788"/>
    </location>
</feature>
<feature type="turn" evidence="23">
    <location>
        <begin position="791"/>
        <end position="793"/>
    </location>
</feature>
<feature type="strand" evidence="23">
    <location>
        <begin position="797"/>
        <end position="806"/>
    </location>
</feature>
<feature type="strand" evidence="23">
    <location>
        <begin position="812"/>
        <end position="828"/>
    </location>
</feature>
<feature type="strand" evidence="23">
    <location>
        <begin position="838"/>
        <end position="841"/>
    </location>
</feature>
<feature type="strand" evidence="21">
    <location>
        <begin position="869"/>
        <end position="881"/>
    </location>
</feature>
<feature type="helix" evidence="21">
    <location>
        <begin position="882"/>
        <end position="884"/>
    </location>
</feature>
<feature type="helix" evidence="21">
    <location>
        <begin position="887"/>
        <end position="891"/>
    </location>
</feature>
<feature type="strand" evidence="21">
    <location>
        <begin position="893"/>
        <end position="897"/>
    </location>
</feature>
<feature type="turn" evidence="21">
    <location>
        <begin position="898"/>
        <end position="901"/>
    </location>
</feature>
<feature type="strand" evidence="21">
    <location>
        <begin position="902"/>
        <end position="912"/>
    </location>
</feature>
<feature type="strand" evidence="21">
    <location>
        <begin position="922"/>
        <end position="927"/>
    </location>
</feature>
<feature type="turn" evidence="21">
    <location>
        <begin position="928"/>
        <end position="931"/>
    </location>
</feature>
<feature type="strand" evidence="21">
    <location>
        <begin position="932"/>
        <end position="937"/>
    </location>
</feature>
<feature type="strand" evidence="21">
    <location>
        <begin position="941"/>
        <end position="946"/>
    </location>
</feature>
<feature type="strand" evidence="21">
    <location>
        <begin position="954"/>
        <end position="964"/>
    </location>
</feature>
<feature type="strand" evidence="21">
    <location>
        <begin position="975"/>
        <end position="978"/>
    </location>
</feature>
<feature type="strand" evidence="21">
    <location>
        <begin position="981"/>
        <end position="990"/>
    </location>
</feature>
<feature type="strand" evidence="21">
    <location>
        <begin position="993"/>
        <end position="998"/>
    </location>
</feature>
<feature type="helix" evidence="22">
    <location>
        <begin position="1458"/>
        <end position="1467"/>
    </location>
</feature>
<feature type="helix" evidence="22">
    <location>
        <begin position="1471"/>
        <end position="1479"/>
    </location>
</feature>
<feature type="strand" evidence="22">
    <location>
        <begin position="1482"/>
        <end position="1485"/>
    </location>
</feature>
<feature type="strand" evidence="22">
    <location>
        <begin position="1489"/>
        <end position="1492"/>
    </location>
</feature>
<reference key="1">
    <citation type="journal article" date="1995" name="Virus Res.">
        <title>Complete nucleotide sequence of enterovirus 71 is distinct from poliovirus.</title>
        <authorList>
            <person name="Brown B.A."/>
            <person name="Pallansch M.A."/>
        </authorList>
    </citation>
    <scope>NUCLEOTIDE SEQUENCE [GENOMIC RNA]</scope>
</reference>
<reference evidence="18" key="2">
    <citation type="journal article" date="2013" name="J. Mol. Biol.">
        <title>Crystal structure of 2A proteinase from hand, foot and mouth disease virus.</title>
        <authorList>
            <person name="Mu Z."/>
            <person name="Wang B."/>
            <person name="Zhang X."/>
            <person name="Gao X."/>
            <person name="Qin B."/>
            <person name="Zhao Z."/>
            <person name="Cui S."/>
        </authorList>
    </citation>
    <scope>X-RAY CRYSTALLOGRAPHY (1.85 ANGSTROMS) OF 860-1012 IN COMPLEX WITH ZINC</scope>
</reference>
<reference evidence="20" key="3">
    <citation type="journal article" date="2019" name="Nat. Microbiol.">
        <title>Unexpected mode of engagement between enterovirus 71 and its receptor SCARB2.</title>
        <authorList>
            <person name="Zhou D."/>
            <person name="Zhao Y."/>
            <person name="Kotecha A."/>
            <person name="Fry E.E."/>
            <person name="Kelly J.T."/>
            <person name="Wang X."/>
            <person name="Rao Z."/>
            <person name="Rowlands D.J."/>
            <person name="Ren J."/>
            <person name="Stuart D.I."/>
        </authorList>
    </citation>
    <scope>STRUCTURE BY ELECTRON MICROSCOPY (3.40 ANGSTROMS) OF 12-862 IN COMPLEX WITH SCARB2</scope>
    <scope>INTERACTION WITH HOST SCARB2 (CAPSID PROTEIN VP1)</scope>
    <scope>INTERACTION WITH HOST SCARB2 (CAPSID PROTEIN VP2)</scope>
    <scope>FUNCTION (CAPSID PROTEIN VP1)</scope>
    <scope>FUNCTION (CAPSID PROTEIN VP2)</scope>
</reference>
<reference evidence="19" key="4">
    <citation type="journal article" date="2019" name="PLoS Pathog.">
        <title>Convergent evolution in the mechanisms of ACBD3 recruitment to picornavirus replication sites.</title>
        <authorList>
            <person name="Horova V."/>
            <person name="Lyoo H."/>
            <person name="Rozycki B."/>
            <person name="Chalupska D."/>
            <person name="Smola M."/>
            <person name="Humpolickova J."/>
            <person name="Strating J.R.P.M."/>
            <person name="van Kuppeveld F.J.M."/>
            <person name="Boura E."/>
            <person name="Klima M."/>
        </authorList>
    </citation>
    <scope>X-RAY CRYSTALLOGRAPHY (2.73 ANGSTROMS) OF 1455-1497</scope>
    <scope>INTERACTION WITH HOST ACBD3 (PROTEIN 3A)</scope>
    <scope>FUNCTION (PROTEIN 3A)</scope>
</reference>